<evidence type="ECO:0000305" key="1"/>
<reference key="1">
    <citation type="journal article" date="2006" name="PLoS Biol.">
        <title>Macronuclear genome sequence of the ciliate Tetrahymena thermophila, a model eukaryote.</title>
        <authorList>
            <person name="Eisen J.A."/>
            <person name="Coyne R.S."/>
            <person name="Wu M."/>
            <person name="Wu D."/>
            <person name="Thiagarajan M."/>
            <person name="Wortman J.R."/>
            <person name="Badger J.H."/>
            <person name="Ren Q."/>
            <person name="Amedeo P."/>
            <person name="Jones K.M."/>
            <person name="Tallon L.J."/>
            <person name="Delcher A.L."/>
            <person name="Salzberg S.L."/>
            <person name="Silva J.C."/>
            <person name="Haas B.J."/>
            <person name="Majoros W.H."/>
            <person name="Farzad M."/>
            <person name="Carlton J.M."/>
            <person name="Smith R.K. Jr."/>
            <person name="Garg J."/>
            <person name="Pearlman R.E."/>
            <person name="Karrer K.M."/>
            <person name="Sun L."/>
            <person name="Manning G."/>
            <person name="Elde N.C."/>
            <person name="Turkewitz A.P."/>
            <person name="Asai D.J."/>
            <person name="Wilkes D.E."/>
            <person name="Wang Y."/>
            <person name="Cai H."/>
            <person name="Collins K."/>
            <person name="Stewart B.A."/>
            <person name="Lee S.R."/>
            <person name="Wilamowska K."/>
            <person name="Weinberg Z."/>
            <person name="Ruzzo W.L."/>
            <person name="Wloga D."/>
            <person name="Gaertig J."/>
            <person name="Frankel J."/>
            <person name="Tsao C.-C."/>
            <person name="Gorovsky M.A."/>
            <person name="Keeling P.J."/>
            <person name="Waller R.F."/>
            <person name="Patron N.J."/>
            <person name="Cherry J.M."/>
            <person name="Stover N.A."/>
            <person name="Krieger C.J."/>
            <person name="del Toro C."/>
            <person name="Ryder H.F."/>
            <person name="Williamson S.C."/>
            <person name="Barbeau R.A."/>
            <person name="Hamilton E.P."/>
            <person name="Orias E."/>
        </authorList>
    </citation>
    <scope>NUCLEOTIDE SEQUENCE [LARGE SCALE GENOMIC DNA]</scope>
    <source>
        <strain>SB210</strain>
    </source>
</reference>
<keyword id="KW-0002">3D-structure</keyword>
<keyword id="KW-1185">Reference proteome</keyword>
<keyword id="KW-0687">Ribonucleoprotein</keyword>
<keyword id="KW-0689">Ribosomal protein</keyword>
<name>RL31_TETTS</name>
<proteinExistence type="evidence at protein level"/>
<accession>Q22DH9</accession>
<feature type="chain" id="PRO_0000413515" description="Large ribosomal subunit protein eL31">
    <location>
        <begin position="1"/>
        <end position="111"/>
    </location>
</feature>
<comment type="similarity">
    <text evidence="1">Belongs to the eukaryotic ribosomal protein eL31 family.</text>
</comment>
<comment type="sequence caution" evidence="1">
    <conflict type="erroneous initiation">
        <sequence resource="EMBL-CDS" id="EAR83379"/>
    </conflict>
    <text>Extended N-terminus.</text>
</comment>
<organism>
    <name type="scientific">Tetrahymena thermophila (strain SB210)</name>
    <dbReference type="NCBI Taxonomy" id="312017"/>
    <lineage>
        <taxon>Eukaryota</taxon>
        <taxon>Sar</taxon>
        <taxon>Alveolata</taxon>
        <taxon>Ciliophora</taxon>
        <taxon>Intramacronucleata</taxon>
        <taxon>Oligohymenophorea</taxon>
        <taxon>Hymenostomatida</taxon>
        <taxon>Tetrahymenina</taxon>
        <taxon>Tetrahymenidae</taxon>
        <taxon>Tetrahymena</taxon>
    </lineage>
</organism>
<protein>
    <recommendedName>
        <fullName evidence="1">Large ribosomal subunit protein eL31</fullName>
    </recommendedName>
    <alternativeName>
        <fullName>60S ribosomal protein L31</fullName>
    </alternativeName>
</protein>
<gene>
    <name type="primary">RPL31</name>
    <name type="ORF">TTHERM_00943010</name>
</gene>
<dbReference type="EMBL" id="GG662797">
    <property type="protein sequence ID" value="EAR83379.2"/>
    <property type="status" value="ALT_INIT"/>
    <property type="molecule type" value="Genomic_DNA"/>
</dbReference>
<dbReference type="RefSeq" id="XP_001031042.2">
    <property type="nucleotide sequence ID" value="XM_001031042.2"/>
</dbReference>
<dbReference type="PDB" id="4V8P">
    <property type="method" value="X-ray"/>
    <property type="resolution" value="3.52 A"/>
    <property type="chains" value="BW/CW/EW/GW=1-111"/>
</dbReference>
<dbReference type="PDBsum" id="4V8P"/>
<dbReference type="SMR" id="Q22DH9"/>
<dbReference type="FunCoup" id="Q22DH9">
    <property type="interactions" value="369"/>
</dbReference>
<dbReference type="IntAct" id="Q22DH9">
    <property type="interactions" value="1"/>
</dbReference>
<dbReference type="STRING" id="312017.Q22DH9"/>
<dbReference type="EnsemblProtists" id="EAR83379">
    <property type="protein sequence ID" value="EAR83379"/>
    <property type="gene ID" value="TTHERM_00943010"/>
</dbReference>
<dbReference type="GeneID" id="7834620"/>
<dbReference type="KEGG" id="tet:TTHERM_00943010"/>
<dbReference type="eggNOG" id="KOG0893">
    <property type="taxonomic scope" value="Eukaryota"/>
</dbReference>
<dbReference type="HOGENOM" id="CLU_112570_1_1_1"/>
<dbReference type="InParanoid" id="Q22DH9"/>
<dbReference type="OMA" id="EVWKQGI"/>
<dbReference type="OrthoDB" id="10253501at2759"/>
<dbReference type="Proteomes" id="UP000009168">
    <property type="component" value="Unassembled WGS sequence"/>
</dbReference>
<dbReference type="GO" id="GO:0022625">
    <property type="term" value="C:cytosolic large ribosomal subunit"/>
    <property type="evidence" value="ECO:0007669"/>
    <property type="project" value="TreeGrafter"/>
</dbReference>
<dbReference type="GO" id="GO:0003735">
    <property type="term" value="F:structural constituent of ribosome"/>
    <property type="evidence" value="ECO:0007669"/>
    <property type="project" value="InterPro"/>
</dbReference>
<dbReference type="GO" id="GO:0002181">
    <property type="term" value="P:cytoplasmic translation"/>
    <property type="evidence" value="ECO:0007669"/>
    <property type="project" value="TreeGrafter"/>
</dbReference>
<dbReference type="CDD" id="cd00463">
    <property type="entry name" value="Ribosomal_L31e"/>
    <property type="match status" value="1"/>
</dbReference>
<dbReference type="FunFam" id="3.10.440.10:FF:000001">
    <property type="entry name" value="60S ribosomal protein L31"/>
    <property type="match status" value="1"/>
</dbReference>
<dbReference type="Gene3D" id="3.10.440.10">
    <property type="match status" value="1"/>
</dbReference>
<dbReference type="InterPro" id="IPR000054">
    <property type="entry name" value="Ribosomal_eL31"/>
</dbReference>
<dbReference type="InterPro" id="IPR023621">
    <property type="entry name" value="Ribosomal_eL31_dom_sf"/>
</dbReference>
<dbReference type="PANTHER" id="PTHR10956">
    <property type="entry name" value="60S RIBOSOMAL PROTEIN L31"/>
    <property type="match status" value="1"/>
</dbReference>
<dbReference type="PANTHER" id="PTHR10956:SF0">
    <property type="entry name" value="60S RIBOSOMAL PROTEIN L31"/>
    <property type="match status" value="1"/>
</dbReference>
<dbReference type="Pfam" id="PF01198">
    <property type="entry name" value="Ribosomal_L31e"/>
    <property type="match status" value="1"/>
</dbReference>
<dbReference type="SMART" id="SM01380">
    <property type="entry name" value="Ribosomal_L31e"/>
    <property type="match status" value="1"/>
</dbReference>
<dbReference type="SUPFAM" id="SSF54575">
    <property type="entry name" value="Ribosomal protein L31e"/>
    <property type="match status" value="1"/>
</dbReference>
<sequence length="111" mass="12963">MVKQEEKSIDTTVNLHKQCHKISFKKKAPRAIREIVAIAKKTMGTDDVRIDTELNKFIWSNGIRNIPRRVRVRLCKRKNEEEGAQSQFYTLVQHLQVDSYHGLLTEKTKAE</sequence>